<gene>
    <name evidence="17" type="primary">CSDE1</name>
    <name type="synonym">D1S155E</name>
    <name type="synonym">KIAA0885</name>
    <name type="synonym">NRU</name>
    <name type="synonym">UNR</name>
</gene>
<keyword id="KW-0002">3D-structure</keyword>
<keyword id="KW-0007">Acetylation</keyword>
<keyword id="KW-0025">Alternative splicing</keyword>
<keyword id="KW-0963">Cytoplasm</keyword>
<keyword id="KW-1017">Isopeptide bond</keyword>
<keyword id="KW-0597">Phosphoprotein</keyword>
<keyword id="KW-1267">Proteomics identification</keyword>
<keyword id="KW-1185">Reference proteome</keyword>
<keyword id="KW-0677">Repeat</keyword>
<keyword id="KW-0694">RNA-binding</keyword>
<keyword id="KW-0832">Ubl conjugation</keyword>
<protein>
    <recommendedName>
        <fullName evidence="15">Cold shock domain-containing protein E1</fullName>
    </recommendedName>
    <alternativeName>
        <fullName>N-ras upstream gene protein</fullName>
    </alternativeName>
    <alternativeName>
        <fullName>Protein UNR</fullName>
    </alternativeName>
</protein>
<comment type="function">
    <text evidence="3 4 7">RNA-binding protein involved in translationally coupled mRNA turnover (PubMed:11051545, PubMed:15314026). Implicated with other RNA-binding proteins in the cytoplasmic deadenylation/translational and decay interplay of the FOS mRNA mediated by the major coding-region determinant of instability (mCRD) domain (PubMed:11051545, PubMed:15314026). Required for efficient formation of stress granules (PubMed:29395067).</text>
</comment>
<comment type="function">
    <text evidence="2">(Microbial infection) Required for internal initiation of translation of human rhinovirus RNA.</text>
</comment>
<comment type="subunit">
    <text evidence="2 3 4 5 6 8">Component of a multi subunit autoregulatory ribonucleoprotein complex (ARC), at least composed of IGF2BP1, PABPC1 and CSDE1 (PubMed:16356927). Interacts with STRAP (PubMed:10049359). Part of a complex associated with the FOS mCRD domain and consisting of PABPC1, PAIP1, HNRPD and SYNCRIP (PubMed:11051545). The interaction with PABPC1 is direct and RNA-independent (PubMed:11051545, PubMed:15314026). Interacts with EIF4ENIF1/4E-T (PubMed:27342281, PubMed:32354837).</text>
</comment>
<comment type="interaction">
    <interactant intactId="EBI-719186">
        <id>O75534</id>
    </interactant>
    <interactant intactId="EBI-10175124">
        <id>Q8IZU0</id>
        <label>FAM9B</label>
    </interactant>
    <organismsDiffer>false</organismsDiffer>
    <experiments>3</experiments>
</comment>
<comment type="interaction">
    <interactant intactId="EBI-719186">
        <id>O75534</id>
    </interactant>
    <interactant intactId="EBI-743438">
        <id>Q8IV36</id>
        <label>HID1</label>
    </interactant>
    <organismsDiffer>false</organismsDiffer>
    <experiments>3</experiments>
</comment>
<comment type="interaction">
    <interactant intactId="EBI-12397458">
        <id>O75534-3</id>
    </interactant>
    <interactant intactId="EBI-743438">
        <id>Q8IV36</id>
        <label>HID1</label>
    </interactant>
    <organismsDiffer>false</organismsDiffer>
    <experiments>3</experiments>
</comment>
<comment type="subcellular location">
    <subcellularLocation>
        <location>Cytoplasm</location>
    </subcellularLocation>
    <subcellularLocation>
        <location evidence="16">Cytoplasm</location>
        <location evidence="16">Stress granule</location>
    </subcellularLocation>
    <subcellularLocation>
        <location evidence="8">Cytoplasm</location>
        <location evidence="8">P-body</location>
    </subcellularLocation>
</comment>
<comment type="alternative products">
    <event type="alternative splicing"/>
    <isoform>
        <id>O75534-1</id>
        <name>1</name>
        <sequence type="displayed"/>
    </isoform>
    <isoform>
        <id>O75534-2</id>
        <name>2</name>
        <sequence type="described" ref="VSP_001138"/>
    </isoform>
    <isoform>
        <id>O75534-3</id>
        <name>3</name>
        <sequence type="described" ref="VSP_045615 VSP_001138"/>
    </isoform>
    <isoform>
        <id>O75534-4</id>
        <name>4</name>
        <sequence type="described" ref="VSP_045615"/>
    </isoform>
    <isoform>
        <id>O75534-5</id>
        <name>5</name>
        <sequence type="described" ref="VSP_062520"/>
    </isoform>
</comment>
<comment type="similarity">
    <text evidence="15">Belongs to the UNR family.</text>
</comment>
<comment type="sequence caution" evidence="15">
    <conflict type="erroneous initiation">
        <sequence resource="EMBL-CDS" id="BAA74908"/>
    </conflict>
    <text>Extended N-terminus.</text>
</comment>
<accession>O75534</accession>
<accession>A8K281</accession>
<accession>E9PGZ0</accession>
<accession>G5E9Q2</accession>
<accession>O94961</accession>
<accession>Q5TF04</accession>
<accession>Q5TF05</accession>
<accession>Q68DF1</accession>
<accession>Q68DI9</accession>
<accession>Q9Y2S4</accession>
<feature type="chain" id="PRO_0000100348" description="Cold shock domain-containing protein E1">
    <location>
        <begin position="1"/>
        <end position="798"/>
    </location>
</feature>
<feature type="domain" description="CSD 1">
    <location>
        <begin position="26"/>
        <end position="87"/>
    </location>
</feature>
<feature type="domain" description="CSD 2; truncated">
    <location>
        <begin position="136"/>
        <end position="179"/>
    </location>
</feature>
<feature type="domain" description="CSD 3">
    <location>
        <begin position="186"/>
        <end position="245"/>
    </location>
</feature>
<feature type="domain" description="CSD 4; truncated">
    <location>
        <begin position="297"/>
        <end position="337"/>
    </location>
</feature>
<feature type="domain" description="CSD 5">
    <location>
        <begin position="349"/>
        <end position="410"/>
    </location>
</feature>
<feature type="domain" description="CSD 6">
    <location>
        <begin position="447"/>
        <end position="507"/>
    </location>
</feature>
<feature type="domain" description="CSD 7">
    <location>
        <begin position="519"/>
        <end position="579"/>
    </location>
</feature>
<feature type="domain" description="CSD 8">
    <location>
        <begin position="610"/>
        <end position="670"/>
    </location>
</feature>
<feature type="domain" description="CSD 9">
    <location>
        <begin position="674"/>
        <end position="735"/>
    </location>
</feature>
<feature type="domain" description="SUZ-C" evidence="1">
    <location>
        <begin position="748"/>
        <end position="789"/>
    </location>
</feature>
<feature type="modified residue" description="N6-acetyllysine" evidence="19">
    <location>
        <position position="81"/>
    </location>
</feature>
<feature type="modified residue" description="Phosphoserine" evidence="18 22">
    <location>
        <position position="123"/>
    </location>
</feature>
<feature type="modified residue" description="Phosphoserine" evidence="22">
    <location>
        <position position="276"/>
    </location>
</feature>
<feature type="modified residue" description="Phosphoserine" evidence="20 21">
    <location>
        <position position="514"/>
    </location>
</feature>
<feature type="modified residue" description="Phosphoserine" evidence="22">
    <location>
        <position position="584"/>
    </location>
</feature>
<feature type="modified residue" description="Phosphothreonine" evidence="22">
    <location>
        <position position="761"/>
    </location>
</feature>
<feature type="cross-link" description="Glycyl lysine isopeptide (Lys-Gly) (interchain with G-Cter in SUMO2)" evidence="23 24">
    <location>
        <position position="91"/>
    </location>
</feature>
<feature type="splice variant" id="VSP_062520" description="In isoform 5." evidence="9">
    <location>
        <begin position="1"/>
        <end position="176"/>
    </location>
</feature>
<feature type="splice variant" id="VSP_045615" description="In isoform 3 and isoform 4." evidence="12">
    <original>M</original>
    <variation>MENVFTVSSDPHPSPAAPPSLSLPLSSSSTSSGTKKQKRTPTYQRSM</variation>
    <location>
        <position position="1"/>
    </location>
</feature>
<feature type="splice variant" id="VSP_001138" description="In isoform 2 and isoform 3." evidence="10 11 12 13 14">
    <location>
        <begin position="104"/>
        <end position="134"/>
    </location>
</feature>
<feature type="sequence conflict" description="In Ref. 2; AAD27787." evidence="15" ref="2">
    <original>E</original>
    <variation>G</variation>
    <location>
        <position position="31"/>
    </location>
</feature>
<feature type="sequence conflict" description="In Ref. 2; AAD27787." evidence="15" ref="2">
    <original>QEIL</original>
    <variation>TRNP</variation>
    <location>
        <begin position="92"/>
        <end position="95"/>
    </location>
</feature>
<feature type="sequence conflict" description="In Ref. 5; CAH18231." evidence="15" ref="5">
    <original>L</original>
    <variation>P</variation>
    <location>
        <position position="152"/>
    </location>
</feature>
<feature type="sequence conflict" description="In Ref. 2; AAD27787." evidence="15" ref="2">
    <original>T</original>
    <variation>P</variation>
    <location>
        <position position="243"/>
    </location>
</feature>
<feature type="sequence conflict" description="In Ref. 5; CAH18269." evidence="15" ref="5">
    <original>S</original>
    <variation>G</variation>
    <location>
        <position position="276"/>
    </location>
</feature>
<feature type="sequence conflict" description="In Ref. 5; CAH18269." evidence="15" ref="5">
    <original>F</original>
    <variation>L</variation>
    <location>
        <position position="299"/>
    </location>
</feature>
<feature type="sequence conflict" description="In Ref. 2; AAD27787." evidence="15" ref="2">
    <original>IKCVDRDVRMFFHFSEILDGNQL</original>
    <variation>HPSVWIRECSVCSFPLPVKFWMGTSS</variation>
    <location>
        <begin position="363"/>
        <end position="385"/>
    </location>
</feature>
<feature type="sequence conflict" description="In Ref. 5; CAH18269." evidence="15" ref="5">
    <original>V</original>
    <variation>I</variation>
    <location>
        <position position="608"/>
    </location>
</feature>
<feature type="strand" evidence="25">
    <location>
        <begin position="19"/>
        <end position="21"/>
    </location>
</feature>
<feature type="strand" evidence="25">
    <location>
        <begin position="25"/>
        <end position="33"/>
    </location>
</feature>
<feature type="strand" evidence="25">
    <location>
        <begin position="35"/>
        <end position="42"/>
    </location>
</feature>
<feature type="turn" evidence="25">
    <location>
        <begin position="43"/>
        <end position="46"/>
    </location>
</feature>
<feature type="strand" evidence="25">
    <location>
        <begin position="47"/>
        <end position="52"/>
    </location>
</feature>
<feature type="turn" evidence="25">
    <location>
        <begin position="53"/>
        <end position="55"/>
    </location>
</feature>
<feature type="turn" evidence="25">
    <location>
        <begin position="60"/>
        <end position="62"/>
    </location>
</feature>
<feature type="strand" evidence="25">
    <location>
        <begin position="69"/>
        <end position="75"/>
    </location>
</feature>
<feature type="strand" evidence="25">
    <location>
        <begin position="77"/>
        <end position="79"/>
    </location>
</feature>
<feature type="strand" evidence="25">
    <location>
        <begin position="82"/>
        <end position="90"/>
    </location>
</feature>
<feature type="strand" evidence="28">
    <location>
        <begin position="186"/>
        <end position="190"/>
    </location>
</feature>
<feature type="strand" evidence="28">
    <location>
        <begin position="195"/>
        <end position="201"/>
    </location>
</feature>
<feature type="strand" evidence="28">
    <location>
        <begin position="203"/>
        <end position="205"/>
    </location>
</feature>
<feature type="strand" evidence="28">
    <location>
        <begin position="209"/>
        <end position="212"/>
    </location>
</feature>
<feature type="turn" evidence="28">
    <location>
        <begin position="213"/>
        <end position="215"/>
    </location>
</feature>
<feature type="strand" evidence="28">
    <location>
        <begin position="228"/>
        <end position="233"/>
    </location>
</feature>
<feature type="strand" evidence="28">
    <location>
        <begin position="237"/>
        <end position="239"/>
    </location>
</feature>
<feature type="strand" evidence="28">
    <location>
        <begin position="241"/>
        <end position="247"/>
    </location>
</feature>
<feature type="strand" evidence="26">
    <location>
        <begin position="349"/>
        <end position="355"/>
    </location>
</feature>
<feature type="strand" evidence="26">
    <location>
        <begin position="362"/>
        <end position="370"/>
    </location>
</feature>
<feature type="helix" evidence="26">
    <location>
        <begin position="378"/>
        <end position="381"/>
    </location>
</feature>
<feature type="strand" evidence="26">
    <location>
        <begin position="391"/>
        <end position="393"/>
    </location>
</feature>
<feature type="strand" evidence="26">
    <location>
        <begin position="399"/>
        <end position="401"/>
    </location>
</feature>
<feature type="strand" evidence="29">
    <location>
        <begin position="519"/>
        <end position="526"/>
    </location>
</feature>
<feature type="strand" evidence="29">
    <location>
        <begin position="528"/>
        <end position="534"/>
    </location>
</feature>
<feature type="strand" evidence="29">
    <location>
        <begin position="536"/>
        <end position="539"/>
    </location>
</feature>
<feature type="strand" evidence="29">
    <location>
        <begin position="541"/>
        <end position="545"/>
    </location>
</feature>
<feature type="turn" evidence="29">
    <location>
        <begin position="546"/>
        <end position="548"/>
    </location>
</feature>
<feature type="turn" evidence="29">
    <location>
        <begin position="553"/>
        <end position="555"/>
    </location>
</feature>
<feature type="strand" evidence="29">
    <location>
        <begin position="561"/>
        <end position="564"/>
    </location>
</feature>
<feature type="strand" evidence="27">
    <location>
        <begin position="676"/>
        <end position="680"/>
    </location>
</feature>
<feature type="strand" evidence="27">
    <location>
        <begin position="683"/>
        <end position="689"/>
    </location>
</feature>
<feature type="strand" evidence="27">
    <location>
        <begin position="693"/>
        <end position="701"/>
    </location>
</feature>
<feature type="turn" evidence="27">
    <location>
        <begin position="702"/>
        <end position="704"/>
    </location>
</feature>
<feature type="strand" evidence="27">
    <location>
        <begin position="716"/>
        <end position="718"/>
    </location>
</feature>
<feature type="strand" evidence="27">
    <location>
        <begin position="725"/>
        <end position="727"/>
    </location>
</feature>
<feature type="modified residue" description="N-acetylmethionine" evidence="9">
    <location sequence="O75534-5">
        <position position="1"/>
    </location>
</feature>
<name>CSDE1_HUMAN</name>
<proteinExistence type="evidence at protein level"/>
<dbReference type="EMBL" id="AF077054">
    <property type="protein sequence ID" value="AAD27787.1"/>
    <property type="molecule type" value="mRNA"/>
</dbReference>
<dbReference type="EMBL" id="AB020692">
    <property type="protein sequence ID" value="BAA74908.2"/>
    <property type="status" value="ALT_INIT"/>
    <property type="molecule type" value="mRNA"/>
</dbReference>
<dbReference type="EMBL" id="AK290146">
    <property type="protein sequence ID" value="BAF82835.1"/>
    <property type="molecule type" value="mRNA"/>
</dbReference>
<dbReference type="EMBL" id="CR749378">
    <property type="protein sequence ID" value="CAH18231.1"/>
    <property type="molecule type" value="mRNA"/>
</dbReference>
<dbReference type="EMBL" id="CR749431">
    <property type="protein sequence ID" value="CAH18269.1"/>
    <property type="molecule type" value="mRNA"/>
</dbReference>
<dbReference type="EMBL" id="AL096773">
    <property type="status" value="NOT_ANNOTATED_CDS"/>
    <property type="molecule type" value="Genomic_DNA"/>
</dbReference>
<dbReference type="EMBL" id="CH471122">
    <property type="protein sequence ID" value="EAW56612.1"/>
    <property type="molecule type" value="Genomic_DNA"/>
</dbReference>
<dbReference type="EMBL" id="CH471122">
    <property type="protein sequence ID" value="EAW56616.1"/>
    <property type="molecule type" value="Genomic_DNA"/>
</dbReference>
<dbReference type="EMBL" id="BC032446">
    <property type="protein sequence ID" value="AAH32446.1"/>
    <property type="molecule type" value="mRNA"/>
</dbReference>
<dbReference type="EMBL" id="AF070542">
    <property type="protein sequence ID" value="AAC28634.1"/>
    <property type="molecule type" value="mRNA"/>
</dbReference>
<dbReference type="CCDS" id="CCDS30811.1">
    <molecule id="O75534-2"/>
</dbReference>
<dbReference type="CCDS" id="CCDS30812.1">
    <molecule id="O75534-1"/>
</dbReference>
<dbReference type="CCDS" id="CCDS44197.1">
    <molecule id="O75534-3"/>
</dbReference>
<dbReference type="CCDS" id="CCDS55626.1">
    <molecule id="O75534-4"/>
</dbReference>
<dbReference type="PIR" id="S29815">
    <property type="entry name" value="S29815"/>
</dbReference>
<dbReference type="RefSeq" id="NP_001007554.1">
    <molecule id="O75534-1"/>
    <property type="nucleotide sequence ID" value="NM_001007553.3"/>
</dbReference>
<dbReference type="RefSeq" id="NP_001123995.1">
    <molecule id="O75534-3"/>
    <property type="nucleotide sequence ID" value="NM_001130523.3"/>
</dbReference>
<dbReference type="RefSeq" id="NP_001229820.1">
    <molecule id="O75534-4"/>
    <property type="nucleotide sequence ID" value="NM_001242891.2"/>
</dbReference>
<dbReference type="RefSeq" id="NP_001229821.1">
    <molecule id="O75534-1"/>
    <property type="nucleotide sequence ID" value="NM_001242892.2"/>
</dbReference>
<dbReference type="RefSeq" id="NP_001229822.1">
    <molecule id="O75534-2"/>
    <property type="nucleotide sequence ID" value="NM_001242893.2"/>
</dbReference>
<dbReference type="RefSeq" id="NP_009089.4">
    <molecule id="O75534-2"/>
    <property type="nucleotide sequence ID" value="NM_007158.5"/>
</dbReference>
<dbReference type="PDB" id="1WFQ">
    <property type="method" value="NMR"/>
    <property type="chains" value="A=15-90"/>
</dbReference>
<dbReference type="PDB" id="1X65">
    <property type="method" value="NMR"/>
    <property type="chains" value="A=348-423"/>
</dbReference>
<dbReference type="PDB" id="2YTV">
    <property type="method" value="NMR"/>
    <property type="chains" value="A=673-738"/>
</dbReference>
<dbReference type="PDB" id="2YTX">
    <property type="method" value="NMR"/>
    <property type="chains" value="A=175-258"/>
</dbReference>
<dbReference type="PDB" id="2YTY">
    <property type="method" value="NMR"/>
    <property type="chains" value="A=508-582"/>
</dbReference>
<dbReference type="PDBsum" id="1WFQ"/>
<dbReference type="PDBsum" id="1X65"/>
<dbReference type="PDBsum" id="2YTV"/>
<dbReference type="PDBsum" id="2YTX"/>
<dbReference type="PDBsum" id="2YTY"/>
<dbReference type="SMR" id="O75534"/>
<dbReference type="BioGRID" id="113583">
    <property type="interactions" value="291"/>
</dbReference>
<dbReference type="ComplexPortal" id="CPX-1076">
    <property type="entry name" value="mCRD-poly(A)-bridging complex"/>
</dbReference>
<dbReference type="CORUM" id="O75534"/>
<dbReference type="FunCoup" id="O75534">
    <property type="interactions" value="2476"/>
</dbReference>
<dbReference type="IntAct" id="O75534">
    <property type="interactions" value="72"/>
</dbReference>
<dbReference type="MINT" id="O75534"/>
<dbReference type="STRING" id="9606.ENSP00000481762"/>
<dbReference type="GlyGen" id="O75534">
    <property type="glycosylation" value="4 sites, 1 N-linked glycan (2 sites), 1 O-linked glycan (2 sites)"/>
</dbReference>
<dbReference type="iPTMnet" id="O75534"/>
<dbReference type="MetOSite" id="O75534"/>
<dbReference type="PhosphoSitePlus" id="O75534"/>
<dbReference type="SwissPalm" id="O75534"/>
<dbReference type="BioMuta" id="CSDE1"/>
<dbReference type="jPOST" id="O75534"/>
<dbReference type="MassIVE" id="O75534"/>
<dbReference type="PaxDb" id="9606-ENSP00000481762"/>
<dbReference type="PeptideAtlas" id="O75534"/>
<dbReference type="ProteomicsDB" id="20422"/>
<dbReference type="ProteomicsDB" id="34008"/>
<dbReference type="ProteomicsDB" id="50073">
    <molecule id="O75534-1"/>
</dbReference>
<dbReference type="ProteomicsDB" id="50074">
    <molecule id="O75534-2"/>
</dbReference>
<dbReference type="Pumba" id="O75534"/>
<dbReference type="Antibodypedia" id="20164">
    <property type="antibodies" value="218 antibodies from 29 providers"/>
</dbReference>
<dbReference type="DNASU" id="7812"/>
<dbReference type="Ensembl" id="ENST00000261443.9">
    <molecule id="O75534-2"/>
    <property type="protein sequence ID" value="ENSP00000261443.5"/>
    <property type="gene ID" value="ENSG00000009307.17"/>
</dbReference>
<dbReference type="Ensembl" id="ENST00000339438.10">
    <molecule id="O75534-2"/>
    <property type="protein sequence ID" value="ENSP00000342408.6"/>
    <property type="gene ID" value="ENSG00000009307.17"/>
</dbReference>
<dbReference type="Ensembl" id="ENST00000358528.9">
    <molecule id="O75534-1"/>
    <property type="protein sequence ID" value="ENSP00000351329.4"/>
    <property type="gene ID" value="ENSG00000009307.17"/>
</dbReference>
<dbReference type="Ensembl" id="ENST00000369530.5">
    <molecule id="O75534-3"/>
    <property type="protein sequence ID" value="ENSP00000358543.1"/>
    <property type="gene ID" value="ENSG00000009307.17"/>
</dbReference>
<dbReference type="Ensembl" id="ENST00000438362.7">
    <molecule id="O75534-1"/>
    <property type="protein sequence ID" value="ENSP00000407724.3"/>
    <property type="gene ID" value="ENSG00000009307.17"/>
</dbReference>
<dbReference type="Ensembl" id="ENST00000534699.5">
    <molecule id="O75534-1"/>
    <property type="protein sequence ID" value="ENSP00000432958.1"/>
    <property type="gene ID" value="ENSG00000009307.17"/>
</dbReference>
<dbReference type="Ensembl" id="ENST00000610726.5">
    <molecule id="O75534-4"/>
    <property type="protein sequence ID" value="ENSP00000481762.1"/>
    <property type="gene ID" value="ENSG00000009307.17"/>
</dbReference>
<dbReference type="Ensembl" id="ENST00000684913.1">
    <molecule id="O75534-2"/>
    <property type="protein sequence ID" value="ENSP00000510656.1"/>
    <property type="gene ID" value="ENSG00000009307.17"/>
</dbReference>
<dbReference type="Ensembl" id="ENST00000686025.1">
    <molecule id="O75534-2"/>
    <property type="protein sequence ID" value="ENSP00000508776.1"/>
    <property type="gene ID" value="ENSG00000009307.17"/>
</dbReference>
<dbReference type="Ensembl" id="ENST00000686235.1">
    <molecule id="O75534-2"/>
    <property type="protein sequence ID" value="ENSP00000509507.1"/>
    <property type="gene ID" value="ENSG00000009307.17"/>
</dbReference>
<dbReference type="Ensembl" id="ENST00000688211.1">
    <molecule id="O75534-4"/>
    <property type="protein sequence ID" value="ENSP00000508995.1"/>
    <property type="gene ID" value="ENSG00000009307.17"/>
</dbReference>
<dbReference type="Ensembl" id="ENST00000689217.1">
    <molecule id="O75534-1"/>
    <property type="protein sequence ID" value="ENSP00000508874.1"/>
    <property type="gene ID" value="ENSG00000009307.17"/>
</dbReference>
<dbReference type="Ensembl" id="ENST00000689732.1">
    <molecule id="O75534-2"/>
    <property type="protein sequence ID" value="ENSP00000510376.1"/>
    <property type="gene ID" value="ENSG00000009307.17"/>
</dbReference>
<dbReference type="Ensembl" id="ENST00000689989.1">
    <molecule id="O75534-1"/>
    <property type="protein sequence ID" value="ENSP00000509808.1"/>
    <property type="gene ID" value="ENSG00000009307.17"/>
</dbReference>
<dbReference type="Ensembl" id="ENST00000692719.1">
    <molecule id="O75534-1"/>
    <property type="protein sequence ID" value="ENSP00000510208.1"/>
    <property type="gene ID" value="ENSG00000009307.17"/>
</dbReference>
<dbReference type="Ensembl" id="ENST00000693467.1">
    <molecule id="O75534-2"/>
    <property type="protein sequence ID" value="ENSP00000510042.1"/>
    <property type="gene ID" value="ENSG00000009307.17"/>
</dbReference>
<dbReference type="GeneID" id="7812"/>
<dbReference type="KEGG" id="hsa:7812"/>
<dbReference type="MANE-Select" id="ENST00000358528.9">
    <property type="protein sequence ID" value="ENSP00000351329.4"/>
    <property type="RefSeq nucleotide sequence ID" value="NM_001007553.3"/>
    <property type="RefSeq protein sequence ID" value="NP_001007554.1"/>
</dbReference>
<dbReference type="UCSC" id="uc001efi.4">
    <molecule id="O75534-1"/>
    <property type="organism name" value="human"/>
</dbReference>
<dbReference type="AGR" id="HGNC:29905"/>
<dbReference type="CTD" id="7812"/>
<dbReference type="DisGeNET" id="7812"/>
<dbReference type="GeneCards" id="CSDE1"/>
<dbReference type="HGNC" id="HGNC:29905">
    <property type="gene designation" value="CSDE1"/>
</dbReference>
<dbReference type="HPA" id="ENSG00000009307">
    <property type="expression patterns" value="Tissue enhanced (skeletal)"/>
</dbReference>
<dbReference type="MalaCards" id="CSDE1"/>
<dbReference type="MIM" id="191510">
    <property type="type" value="gene"/>
</dbReference>
<dbReference type="neXtProt" id="NX_O75534"/>
<dbReference type="OpenTargets" id="ENSG00000009307"/>
<dbReference type="PharmGKB" id="PA142672072"/>
<dbReference type="VEuPathDB" id="HostDB:ENSG00000009307"/>
<dbReference type="eggNOG" id="ENOG502QSJ1">
    <property type="taxonomic scope" value="Eukaryota"/>
</dbReference>
<dbReference type="GeneTree" id="ENSGT00390000016950"/>
<dbReference type="HOGENOM" id="CLU_012335_1_0_1"/>
<dbReference type="InParanoid" id="O75534"/>
<dbReference type="OMA" id="NLGACHV"/>
<dbReference type="OrthoDB" id="74319at2759"/>
<dbReference type="PAN-GO" id="O75534">
    <property type="GO annotations" value="0 GO annotations based on evolutionary models"/>
</dbReference>
<dbReference type="PhylomeDB" id="O75534"/>
<dbReference type="TreeFam" id="TF324707"/>
<dbReference type="PathwayCommons" id="O75534"/>
<dbReference type="SignaLink" id="O75534"/>
<dbReference type="SIGNOR" id="O75534"/>
<dbReference type="BioGRID-ORCS" id="7812">
    <property type="hits" value="203 hits in 1194 CRISPR screens"/>
</dbReference>
<dbReference type="CD-CODE" id="232F8A39">
    <property type="entry name" value="P-body"/>
</dbReference>
<dbReference type="CD-CODE" id="DEE660B4">
    <property type="entry name" value="Stress granule"/>
</dbReference>
<dbReference type="ChiTaRS" id="CSDE1">
    <property type="organism name" value="human"/>
</dbReference>
<dbReference type="EvolutionaryTrace" id="O75534"/>
<dbReference type="GeneWiki" id="CSDE1"/>
<dbReference type="GenomeRNAi" id="7812"/>
<dbReference type="Pharos" id="O75534">
    <property type="development level" value="Tbio"/>
</dbReference>
<dbReference type="PRO" id="PR:O75534"/>
<dbReference type="Proteomes" id="UP000005640">
    <property type="component" value="Chromosome 1"/>
</dbReference>
<dbReference type="RNAct" id="O75534">
    <property type="molecule type" value="protein"/>
</dbReference>
<dbReference type="Bgee" id="ENSG00000009307">
    <property type="expression patterns" value="Expressed in calcaneal tendon and 208 other cell types or tissues"/>
</dbReference>
<dbReference type="ExpressionAtlas" id="O75534">
    <property type="expression patterns" value="baseline and differential"/>
</dbReference>
<dbReference type="GO" id="GO:0070937">
    <property type="term" value="C:CRD-mediated mRNA stability complex"/>
    <property type="evidence" value="ECO:0000314"/>
    <property type="project" value="UniProtKB"/>
</dbReference>
<dbReference type="GO" id="GO:0010494">
    <property type="term" value="C:cytoplasmic stress granule"/>
    <property type="evidence" value="ECO:0007669"/>
    <property type="project" value="UniProtKB-SubCell"/>
</dbReference>
<dbReference type="GO" id="GO:0005829">
    <property type="term" value="C:cytosol"/>
    <property type="evidence" value="ECO:0000314"/>
    <property type="project" value="HPA"/>
</dbReference>
<dbReference type="GO" id="GO:0005794">
    <property type="term" value="C:Golgi apparatus"/>
    <property type="evidence" value="ECO:0000314"/>
    <property type="project" value="HPA"/>
</dbReference>
<dbReference type="GO" id="GO:0106002">
    <property type="term" value="C:mCRD-mediated mRNA stability complex"/>
    <property type="evidence" value="ECO:0000353"/>
    <property type="project" value="ComplexPortal"/>
</dbReference>
<dbReference type="GO" id="GO:0000932">
    <property type="term" value="C:P-body"/>
    <property type="evidence" value="ECO:0007669"/>
    <property type="project" value="UniProtKB-SubCell"/>
</dbReference>
<dbReference type="GO" id="GO:0005886">
    <property type="term" value="C:plasma membrane"/>
    <property type="evidence" value="ECO:0000314"/>
    <property type="project" value="HPA"/>
</dbReference>
<dbReference type="GO" id="GO:0106222">
    <property type="term" value="F:lncRNA binding"/>
    <property type="evidence" value="ECO:0000353"/>
    <property type="project" value="FlyBase"/>
</dbReference>
<dbReference type="GO" id="GO:0003729">
    <property type="term" value="F:mRNA binding"/>
    <property type="evidence" value="ECO:0000304"/>
    <property type="project" value="FlyBase"/>
</dbReference>
<dbReference type="GO" id="GO:1905172">
    <property type="term" value="F:RISC complex binding"/>
    <property type="evidence" value="ECO:0000314"/>
    <property type="project" value="FlyBase"/>
</dbReference>
<dbReference type="GO" id="GO:0003723">
    <property type="term" value="F:RNA binding"/>
    <property type="evidence" value="ECO:0007005"/>
    <property type="project" value="UniProtKB"/>
</dbReference>
<dbReference type="GO" id="GO:0035613">
    <property type="term" value="F:RNA stem-loop binding"/>
    <property type="evidence" value="ECO:0000314"/>
    <property type="project" value="FlyBase"/>
</dbReference>
<dbReference type="GO" id="GO:0070934">
    <property type="term" value="P:CRD-mediated mRNA stabilization"/>
    <property type="evidence" value="ECO:0000314"/>
    <property type="project" value="ComplexPortal"/>
</dbReference>
<dbReference type="GO" id="GO:0075522">
    <property type="term" value="P:IRES-dependent viral translational initiation"/>
    <property type="evidence" value="ECO:0000314"/>
    <property type="project" value="FlyBase"/>
</dbReference>
<dbReference type="GO" id="GO:0008584">
    <property type="term" value="P:male gonad development"/>
    <property type="evidence" value="ECO:0000304"/>
    <property type="project" value="ProtInc"/>
</dbReference>
<dbReference type="GO" id="GO:1900152">
    <property type="term" value="P:negative regulation of nuclear-transcribed mRNA catabolic process, deadenylation-dependent decay"/>
    <property type="evidence" value="ECO:0000314"/>
    <property type="project" value="ComplexPortal"/>
</dbReference>
<dbReference type="GO" id="GO:0070966">
    <property type="term" value="P:nuclear-transcribed mRNA catabolic process, no-go decay"/>
    <property type="evidence" value="ECO:0000315"/>
    <property type="project" value="UniProtKB"/>
</dbReference>
<dbReference type="GO" id="GO:2000767">
    <property type="term" value="P:positive regulation of cytoplasmic translation"/>
    <property type="evidence" value="ECO:0000314"/>
    <property type="project" value="ComplexPortal"/>
</dbReference>
<dbReference type="GO" id="GO:0045727">
    <property type="term" value="P:positive regulation of translation"/>
    <property type="evidence" value="ECO:0000315"/>
    <property type="project" value="FlyBase"/>
</dbReference>
<dbReference type="GO" id="GO:0006446">
    <property type="term" value="P:regulation of translational initiation"/>
    <property type="evidence" value="ECO:0000250"/>
    <property type="project" value="FlyBase"/>
</dbReference>
<dbReference type="GO" id="GO:0034063">
    <property type="term" value="P:stress granule assembly"/>
    <property type="evidence" value="ECO:0000315"/>
    <property type="project" value="UniProtKB"/>
</dbReference>
<dbReference type="CDD" id="cd04458">
    <property type="entry name" value="CSP_CDS"/>
    <property type="match status" value="2"/>
</dbReference>
<dbReference type="FunFam" id="2.40.50.140:FF:000055">
    <property type="entry name" value="Cold shock domain containing E1, RNA-binding"/>
    <property type="match status" value="1"/>
</dbReference>
<dbReference type="FunFam" id="2.40.50.140:FF:000088">
    <property type="entry name" value="cold shock domain-containing protein E1 isoform X1"/>
    <property type="match status" value="1"/>
</dbReference>
<dbReference type="FunFam" id="2.40.50.140:FF:000093">
    <property type="entry name" value="cold shock domain-containing protein E1 isoform X1"/>
    <property type="match status" value="1"/>
</dbReference>
<dbReference type="FunFam" id="2.40.50.140:FF:000094">
    <property type="entry name" value="cold shock domain-containing protein E1 isoform X1"/>
    <property type="match status" value="1"/>
</dbReference>
<dbReference type="FunFam" id="2.40.50.140:FF:000133">
    <property type="entry name" value="cold shock domain-containing protein E1 isoform X1"/>
    <property type="match status" value="1"/>
</dbReference>
<dbReference type="Gene3D" id="2.40.50.140">
    <property type="entry name" value="Nucleic acid-binding proteins"/>
    <property type="match status" value="6"/>
</dbReference>
<dbReference type="InterPro" id="IPR011129">
    <property type="entry name" value="CSD"/>
</dbReference>
<dbReference type="InterPro" id="IPR019844">
    <property type="entry name" value="CSD_CS"/>
</dbReference>
<dbReference type="InterPro" id="IPR056400">
    <property type="entry name" value="CSDE1"/>
</dbReference>
<dbReference type="InterPro" id="IPR002059">
    <property type="entry name" value="CSP_DNA-bd"/>
</dbReference>
<dbReference type="InterPro" id="IPR012340">
    <property type="entry name" value="NA-bd_OB-fold"/>
</dbReference>
<dbReference type="InterPro" id="IPR024642">
    <property type="entry name" value="SUZ-C"/>
</dbReference>
<dbReference type="PANTHER" id="PTHR12913:SF1">
    <property type="entry name" value="COLD SHOCK DOMAIN-CONTAINING PROTEIN E1"/>
    <property type="match status" value="1"/>
</dbReference>
<dbReference type="PANTHER" id="PTHR12913">
    <property type="entry name" value="UNR PROTEIN N-RAS UPSTREAM GENE PROTEIN"/>
    <property type="match status" value="1"/>
</dbReference>
<dbReference type="Pfam" id="PF00313">
    <property type="entry name" value="CSD"/>
    <property type="match status" value="5"/>
</dbReference>
<dbReference type="Pfam" id="PF23456">
    <property type="entry name" value="CSDE1"/>
    <property type="match status" value="4"/>
</dbReference>
<dbReference type="Pfam" id="PF12901">
    <property type="entry name" value="SUZ-C"/>
    <property type="match status" value="1"/>
</dbReference>
<dbReference type="SMART" id="SM00357">
    <property type="entry name" value="CSP"/>
    <property type="match status" value="5"/>
</dbReference>
<dbReference type="SUPFAM" id="SSF50249">
    <property type="entry name" value="Nucleic acid-binding proteins"/>
    <property type="match status" value="5"/>
</dbReference>
<dbReference type="PROSITE" id="PS00352">
    <property type="entry name" value="CSD_1"/>
    <property type="match status" value="4"/>
</dbReference>
<dbReference type="PROSITE" id="PS51857">
    <property type="entry name" value="CSD_2"/>
    <property type="match status" value="9"/>
</dbReference>
<dbReference type="PROSITE" id="PS51938">
    <property type="entry name" value="SUZ_C"/>
    <property type="match status" value="1"/>
</dbReference>
<evidence type="ECO:0000255" key="1">
    <source>
        <dbReference type="PROSITE-ProRule" id="PRU01287"/>
    </source>
</evidence>
<evidence type="ECO:0000269" key="2">
    <source>
    </source>
</evidence>
<evidence type="ECO:0000269" key="3">
    <source>
    </source>
</evidence>
<evidence type="ECO:0000269" key="4">
    <source>
    </source>
</evidence>
<evidence type="ECO:0000269" key="5">
    <source>
    </source>
</evidence>
<evidence type="ECO:0000269" key="6">
    <source>
    </source>
</evidence>
<evidence type="ECO:0000269" key="7">
    <source>
    </source>
</evidence>
<evidence type="ECO:0000269" key="8">
    <source>
    </source>
</evidence>
<evidence type="ECO:0000269" key="9">
    <source>
    </source>
</evidence>
<evidence type="ECO:0000303" key="10">
    <source>
    </source>
</evidence>
<evidence type="ECO:0000303" key="11">
    <source>
    </source>
</evidence>
<evidence type="ECO:0000303" key="12">
    <source>
    </source>
</evidence>
<evidence type="ECO:0000303" key="13">
    <source>
    </source>
</evidence>
<evidence type="ECO:0000303" key="14">
    <source ref="9"/>
</evidence>
<evidence type="ECO:0000305" key="15"/>
<evidence type="ECO:0000305" key="16">
    <source>
    </source>
</evidence>
<evidence type="ECO:0000312" key="17">
    <source>
        <dbReference type="HGNC" id="HGNC:29905"/>
    </source>
</evidence>
<evidence type="ECO:0007744" key="18">
    <source>
    </source>
</evidence>
<evidence type="ECO:0007744" key="19">
    <source>
    </source>
</evidence>
<evidence type="ECO:0007744" key="20">
    <source>
    </source>
</evidence>
<evidence type="ECO:0007744" key="21">
    <source>
    </source>
</evidence>
<evidence type="ECO:0007744" key="22">
    <source>
    </source>
</evidence>
<evidence type="ECO:0007744" key="23">
    <source>
    </source>
</evidence>
<evidence type="ECO:0007744" key="24">
    <source>
    </source>
</evidence>
<evidence type="ECO:0007829" key="25">
    <source>
        <dbReference type="PDB" id="1WFQ"/>
    </source>
</evidence>
<evidence type="ECO:0007829" key="26">
    <source>
        <dbReference type="PDB" id="1X65"/>
    </source>
</evidence>
<evidence type="ECO:0007829" key="27">
    <source>
        <dbReference type="PDB" id="2YTV"/>
    </source>
</evidence>
<evidence type="ECO:0007829" key="28">
    <source>
        <dbReference type="PDB" id="2YTX"/>
    </source>
</evidence>
<evidence type="ECO:0007829" key="29">
    <source>
        <dbReference type="PDB" id="2YTY"/>
    </source>
</evidence>
<sequence length="798" mass="88885">MSFDPNLLHNNGHNGYPNGTSAALRETGVIEKLLTSYGFIQCSERQARLFFHCSQYNGNLQDLKVGDDVEFEVSSDRRTGKPIAVKLVKIKQEILPEERMNGQVVCAVPHNLESKSPAAPGQSPTGSVCYERNGEVFYLTYTPEDVEGNVQLETGDKINFVIDNNKHTGAVSARNIMLLKKKQARCQGVVCAMKEAFGFIERGDVVKEIFFHYSEFKGDLETLQPGDDVEFTIKDRNGKEVATDVRLLPQGTVIFEDISIEHFEGTVTKVIPKVPSKNQNDPLPGRIKVDFVIPKELPFGDKDTKSKVTLLEGDHVRFNISTDRRDKLERATNIEVLSNTFQFTNEAREMGVIAAMRDGFGFIKCVDRDVRMFFHFSEILDGNQLHIADEVEFTVVPDMLSAQRNHAIRIKKLPKGTVSFHSHSDHRFLGTVEKEATFSNPKTTSPNKGKEKEAEDGIIAYDDCGVKLTIAFQAKDVEGSTSPQIGDKVEFSISDKQRPGQQVATCVRLLGRNSNSKRLLGYVATLKDNFGFIETANHDKEIFFHYSEFSGDVDSLELGDMVEYSLSKGKGNKVSAEKVNKTHSVNGITEEADPTIYSGKVIRPLRSVDPTQTEYQGMIEIVEEGDMKGEVYPFGIVGMANKGDCLQKGESVKFQLCVLGQNAQTMAYNITPLRRATVECVKDQFGFINYEVGDSKKLFFHVKEVQDGIELQAGDEVEFSVILNQRTGKCSACNVWRVCEGPKAVAAPRPDRLVNRLKNITLDDASAPRLMVLRQPRGPDNSMGFGAERKIRQAGVID</sequence>
<organism>
    <name type="scientific">Homo sapiens</name>
    <name type="common">Human</name>
    <dbReference type="NCBI Taxonomy" id="9606"/>
    <lineage>
        <taxon>Eukaryota</taxon>
        <taxon>Metazoa</taxon>
        <taxon>Chordata</taxon>
        <taxon>Craniata</taxon>
        <taxon>Vertebrata</taxon>
        <taxon>Euteleostomi</taxon>
        <taxon>Mammalia</taxon>
        <taxon>Eutheria</taxon>
        <taxon>Euarchontoglires</taxon>
        <taxon>Primates</taxon>
        <taxon>Haplorrhini</taxon>
        <taxon>Catarrhini</taxon>
        <taxon>Hominidae</taxon>
        <taxon>Homo</taxon>
    </lineage>
</organism>
<reference key="1">
    <citation type="journal article" date="1991" name="Oncogene">
        <title>Organization of the human N-ras locus: characterization of a gene located immediately upstream of N-ras.</title>
        <authorList>
            <person name="Nicolaiew N."/>
            <person name="Triqueneaux G."/>
            <person name="Dautry F."/>
        </authorList>
    </citation>
    <scope>NUCLEOTIDE SEQUENCE [MRNA] (ISOFORM 2)</scope>
</reference>
<reference key="2">
    <citation type="journal article" date="2000" name="Proc. Natl. Acad. Sci. U.S.A.">
        <title>Gene expression profiling in the human hypothalamus-pituitary-adrenal axis and full-length cDNA cloning.</title>
        <authorList>
            <person name="Hu R.-M."/>
            <person name="Han Z.-G."/>
            <person name="Song H.-D."/>
            <person name="Peng Y.-D."/>
            <person name="Huang Q.-H."/>
            <person name="Ren S.-X."/>
            <person name="Gu Y.-J."/>
            <person name="Huang C.-H."/>
            <person name="Li Y.-B."/>
            <person name="Jiang C.-L."/>
            <person name="Fu G."/>
            <person name="Zhang Q.-H."/>
            <person name="Gu B.-W."/>
            <person name="Dai M."/>
            <person name="Mao Y.-F."/>
            <person name="Gao G.-F."/>
            <person name="Rong R."/>
            <person name="Ye M."/>
            <person name="Zhou J."/>
            <person name="Xu S.-H."/>
            <person name="Gu J."/>
            <person name="Shi J.-X."/>
            <person name="Jin W.-R."/>
            <person name="Zhang C.-K."/>
            <person name="Wu T.-M."/>
            <person name="Huang G.-Y."/>
            <person name="Chen Z."/>
            <person name="Chen M.-D."/>
            <person name="Chen J.-L."/>
        </authorList>
    </citation>
    <scope>NUCLEOTIDE SEQUENCE [MRNA] (ISOFORM 2)</scope>
    <source>
        <tissue>Pituitary</tissue>
    </source>
</reference>
<reference key="3">
    <citation type="journal article" date="1998" name="DNA Res.">
        <title>Prediction of the coding sequences of unidentified human genes. XII. The complete sequences of 100 new cDNA clones from brain which code for large proteins in vitro.</title>
        <authorList>
            <person name="Nagase T."/>
            <person name="Ishikawa K."/>
            <person name="Suyama M."/>
            <person name="Kikuno R."/>
            <person name="Hirosawa M."/>
            <person name="Miyajima N."/>
            <person name="Tanaka A."/>
            <person name="Kotani H."/>
            <person name="Nomura N."/>
            <person name="Ohara O."/>
        </authorList>
    </citation>
    <scope>NUCLEOTIDE SEQUENCE [LARGE SCALE MRNA] (ISOFORM 1)</scope>
    <source>
        <tissue>Brain</tissue>
    </source>
</reference>
<reference key="4">
    <citation type="journal article" date="2004" name="Nat. Genet.">
        <title>Complete sequencing and characterization of 21,243 full-length human cDNAs.</title>
        <authorList>
            <person name="Ota T."/>
            <person name="Suzuki Y."/>
            <person name="Nishikawa T."/>
            <person name="Otsuki T."/>
            <person name="Sugiyama T."/>
            <person name="Irie R."/>
            <person name="Wakamatsu A."/>
            <person name="Hayashi K."/>
            <person name="Sato H."/>
            <person name="Nagai K."/>
            <person name="Kimura K."/>
            <person name="Makita H."/>
            <person name="Sekine M."/>
            <person name="Obayashi M."/>
            <person name="Nishi T."/>
            <person name="Shibahara T."/>
            <person name="Tanaka T."/>
            <person name="Ishii S."/>
            <person name="Yamamoto J."/>
            <person name="Saito K."/>
            <person name="Kawai Y."/>
            <person name="Isono Y."/>
            <person name="Nakamura Y."/>
            <person name="Nagahari K."/>
            <person name="Murakami K."/>
            <person name="Yasuda T."/>
            <person name="Iwayanagi T."/>
            <person name="Wagatsuma M."/>
            <person name="Shiratori A."/>
            <person name="Sudo H."/>
            <person name="Hosoiri T."/>
            <person name="Kaku Y."/>
            <person name="Kodaira H."/>
            <person name="Kondo H."/>
            <person name="Sugawara M."/>
            <person name="Takahashi M."/>
            <person name="Kanda K."/>
            <person name="Yokoi T."/>
            <person name="Furuya T."/>
            <person name="Kikkawa E."/>
            <person name="Omura Y."/>
            <person name="Abe K."/>
            <person name="Kamihara K."/>
            <person name="Katsuta N."/>
            <person name="Sato K."/>
            <person name="Tanikawa M."/>
            <person name="Yamazaki M."/>
            <person name="Ninomiya K."/>
            <person name="Ishibashi T."/>
            <person name="Yamashita H."/>
            <person name="Murakawa K."/>
            <person name="Fujimori K."/>
            <person name="Tanai H."/>
            <person name="Kimata M."/>
            <person name="Watanabe M."/>
            <person name="Hiraoka S."/>
            <person name="Chiba Y."/>
            <person name="Ishida S."/>
            <person name="Ono Y."/>
            <person name="Takiguchi S."/>
            <person name="Watanabe S."/>
            <person name="Yosida M."/>
            <person name="Hotuta T."/>
            <person name="Kusano J."/>
            <person name="Kanehori K."/>
            <person name="Takahashi-Fujii A."/>
            <person name="Hara H."/>
            <person name="Tanase T.-O."/>
            <person name="Nomura Y."/>
            <person name="Togiya S."/>
            <person name="Komai F."/>
            <person name="Hara R."/>
            <person name="Takeuchi K."/>
            <person name="Arita M."/>
            <person name="Imose N."/>
            <person name="Musashino K."/>
            <person name="Yuuki H."/>
            <person name="Oshima A."/>
            <person name="Sasaki N."/>
            <person name="Aotsuka S."/>
            <person name="Yoshikawa Y."/>
            <person name="Matsunawa H."/>
            <person name="Ichihara T."/>
            <person name="Shiohata N."/>
            <person name="Sano S."/>
            <person name="Moriya S."/>
            <person name="Momiyama H."/>
            <person name="Satoh N."/>
            <person name="Takami S."/>
            <person name="Terashima Y."/>
            <person name="Suzuki O."/>
            <person name="Nakagawa S."/>
            <person name="Senoh A."/>
            <person name="Mizoguchi H."/>
            <person name="Goto Y."/>
            <person name="Shimizu F."/>
            <person name="Wakebe H."/>
            <person name="Hishigaki H."/>
            <person name="Watanabe T."/>
            <person name="Sugiyama A."/>
            <person name="Takemoto M."/>
            <person name="Kawakami B."/>
            <person name="Yamazaki M."/>
            <person name="Watanabe K."/>
            <person name="Kumagai A."/>
            <person name="Itakura S."/>
            <person name="Fukuzumi Y."/>
            <person name="Fujimori Y."/>
            <person name="Komiyama M."/>
            <person name="Tashiro H."/>
            <person name="Tanigami A."/>
            <person name="Fujiwara T."/>
            <person name="Ono T."/>
            <person name="Yamada K."/>
            <person name="Fujii Y."/>
            <person name="Ozaki K."/>
            <person name="Hirao M."/>
            <person name="Ohmori Y."/>
            <person name="Kawabata A."/>
            <person name="Hikiji T."/>
            <person name="Kobatake N."/>
            <person name="Inagaki H."/>
            <person name="Ikema Y."/>
            <person name="Okamoto S."/>
            <person name="Okitani R."/>
            <person name="Kawakami T."/>
            <person name="Noguchi S."/>
            <person name="Itoh T."/>
            <person name="Shigeta K."/>
            <person name="Senba T."/>
            <person name="Matsumura K."/>
            <person name="Nakajima Y."/>
            <person name="Mizuno T."/>
            <person name="Morinaga M."/>
            <person name="Sasaki M."/>
            <person name="Togashi T."/>
            <person name="Oyama M."/>
            <person name="Hata H."/>
            <person name="Watanabe M."/>
            <person name="Komatsu T."/>
            <person name="Mizushima-Sugano J."/>
            <person name="Satoh T."/>
            <person name="Shirai Y."/>
            <person name="Takahashi Y."/>
            <person name="Nakagawa K."/>
            <person name="Okumura K."/>
            <person name="Nagase T."/>
            <person name="Nomura N."/>
            <person name="Kikuchi H."/>
            <person name="Masuho Y."/>
            <person name="Yamashita R."/>
            <person name="Nakai K."/>
            <person name="Yada T."/>
            <person name="Nakamura Y."/>
            <person name="Ohara O."/>
            <person name="Isogai T."/>
            <person name="Sugano S."/>
        </authorList>
    </citation>
    <scope>NUCLEOTIDE SEQUENCE [LARGE SCALE MRNA] (ISOFORM 1)</scope>
    <source>
        <tissue>Thalamus</tissue>
    </source>
</reference>
<reference key="5">
    <citation type="journal article" date="2007" name="BMC Genomics">
        <title>The full-ORF clone resource of the German cDNA consortium.</title>
        <authorList>
            <person name="Bechtel S."/>
            <person name="Rosenfelder H."/>
            <person name="Duda A."/>
            <person name="Schmidt C.P."/>
            <person name="Ernst U."/>
            <person name="Wellenreuther R."/>
            <person name="Mehrle A."/>
            <person name="Schuster C."/>
            <person name="Bahr A."/>
            <person name="Bloecker H."/>
            <person name="Heubner D."/>
            <person name="Hoerlein A."/>
            <person name="Michel G."/>
            <person name="Wedler H."/>
            <person name="Koehrer K."/>
            <person name="Ottenwaelder B."/>
            <person name="Poustka A."/>
            <person name="Wiemann S."/>
            <person name="Schupp I."/>
        </authorList>
    </citation>
    <scope>NUCLEOTIDE SEQUENCE [LARGE SCALE MRNA] (ISOFORMS 3 AND 4)</scope>
    <source>
        <tissue>Liver</tissue>
    </source>
</reference>
<reference key="6">
    <citation type="journal article" date="2006" name="Nature">
        <title>The DNA sequence and biological annotation of human chromosome 1.</title>
        <authorList>
            <person name="Gregory S.G."/>
            <person name="Barlow K.F."/>
            <person name="McLay K.E."/>
            <person name="Kaul R."/>
            <person name="Swarbreck D."/>
            <person name="Dunham A."/>
            <person name="Scott C.E."/>
            <person name="Howe K.L."/>
            <person name="Woodfine K."/>
            <person name="Spencer C.C.A."/>
            <person name="Jones M.C."/>
            <person name="Gillson C."/>
            <person name="Searle S."/>
            <person name="Zhou Y."/>
            <person name="Kokocinski F."/>
            <person name="McDonald L."/>
            <person name="Evans R."/>
            <person name="Phillips K."/>
            <person name="Atkinson A."/>
            <person name="Cooper R."/>
            <person name="Jones C."/>
            <person name="Hall R.E."/>
            <person name="Andrews T.D."/>
            <person name="Lloyd C."/>
            <person name="Ainscough R."/>
            <person name="Almeida J.P."/>
            <person name="Ambrose K.D."/>
            <person name="Anderson F."/>
            <person name="Andrew R.W."/>
            <person name="Ashwell R.I.S."/>
            <person name="Aubin K."/>
            <person name="Babbage A.K."/>
            <person name="Bagguley C.L."/>
            <person name="Bailey J."/>
            <person name="Beasley H."/>
            <person name="Bethel G."/>
            <person name="Bird C.P."/>
            <person name="Bray-Allen S."/>
            <person name="Brown J.Y."/>
            <person name="Brown A.J."/>
            <person name="Buckley D."/>
            <person name="Burton J."/>
            <person name="Bye J."/>
            <person name="Carder C."/>
            <person name="Chapman J.C."/>
            <person name="Clark S.Y."/>
            <person name="Clarke G."/>
            <person name="Clee C."/>
            <person name="Cobley V."/>
            <person name="Collier R.E."/>
            <person name="Corby N."/>
            <person name="Coville G.J."/>
            <person name="Davies J."/>
            <person name="Deadman R."/>
            <person name="Dunn M."/>
            <person name="Earthrowl M."/>
            <person name="Ellington A.G."/>
            <person name="Errington H."/>
            <person name="Frankish A."/>
            <person name="Frankland J."/>
            <person name="French L."/>
            <person name="Garner P."/>
            <person name="Garnett J."/>
            <person name="Gay L."/>
            <person name="Ghori M.R.J."/>
            <person name="Gibson R."/>
            <person name="Gilby L.M."/>
            <person name="Gillett W."/>
            <person name="Glithero R.J."/>
            <person name="Grafham D.V."/>
            <person name="Griffiths C."/>
            <person name="Griffiths-Jones S."/>
            <person name="Grocock R."/>
            <person name="Hammond S."/>
            <person name="Harrison E.S.I."/>
            <person name="Hart E."/>
            <person name="Haugen E."/>
            <person name="Heath P.D."/>
            <person name="Holmes S."/>
            <person name="Holt K."/>
            <person name="Howden P.J."/>
            <person name="Hunt A.R."/>
            <person name="Hunt S.E."/>
            <person name="Hunter G."/>
            <person name="Isherwood J."/>
            <person name="James R."/>
            <person name="Johnson C."/>
            <person name="Johnson D."/>
            <person name="Joy A."/>
            <person name="Kay M."/>
            <person name="Kershaw J.K."/>
            <person name="Kibukawa M."/>
            <person name="Kimberley A.M."/>
            <person name="King A."/>
            <person name="Knights A.J."/>
            <person name="Lad H."/>
            <person name="Laird G."/>
            <person name="Lawlor S."/>
            <person name="Leongamornlert D.A."/>
            <person name="Lloyd D.M."/>
            <person name="Loveland J."/>
            <person name="Lovell J."/>
            <person name="Lush M.J."/>
            <person name="Lyne R."/>
            <person name="Martin S."/>
            <person name="Mashreghi-Mohammadi M."/>
            <person name="Matthews L."/>
            <person name="Matthews N.S.W."/>
            <person name="McLaren S."/>
            <person name="Milne S."/>
            <person name="Mistry S."/>
            <person name="Moore M.J.F."/>
            <person name="Nickerson T."/>
            <person name="O'Dell C.N."/>
            <person name="Oliver K."/>
            <person name="Palmeiri A."/>
            <person name="Palmer S.A."/>
            <person name="Parker A."/>
            <person name="Patel D."/>
            <person name="Pearce A.V."/>
            <person name="Peck A.I."/>
            <person name="Pelan S."/>
            <person name="Phelps K."/>
            <person name="Phillimore B.J."/>
            <person name="Plumb R."/>
            <person name="Rajan J."/>
            <person name="Raymond C."/>
            <person name="Rouse G."/>
            <person name="Saenphimmachak C."/>
            <person name="Sehra H.K."/>
            <person name="Sheridan E."/>
            <person name="Shownkeen R."/>
            <person name="Sims S."/>
            <person name="Skuce C.D."/>
            <person name="Smith M."/>
            <person name="Steward C."/>
            <person name="Subramanian S."/>
            <person name="Sycamore N."/>
            <person name="Tracey A."/>
            <person name="Tromans A."/>
            <person name="Van Helmond Z."/>
            <person name="Wall M."/>
            <person name="Wallis J.M."/>
            <person name="White S."/>
            <person name="Whitehead S.L."/>
            <person name="Wilkinson J.E."/>
            <person name="Willey D.L."/>
            <person name="Williams H."/>
            <person name="Wilming L."/>
            <person name="Wray P.W."/>
            <person name="Wu Z."/>
            <person name="Coulson A."/>
            <person name="Vaudin M."/>
            <person name="Sulston J.E."/>
            <person name="Durbin R.M."/>
            <person name="Hubbard T."/>
            <person name="Wooster R."/>
            <person name="Dunham I."/>
            <person name="Carter N.P."/>
            <person name="McVean G."/>
            <person name="Ross M.T."/>
            <person name="Harrow J."/>
            <person name="Olson M.V."/>
            <person name="Beck S."/>
            <person name="Rogers J."/>
            <person name="Bentley D.R."/>
        </authorList>
    </citation>
    <scope>NUCLEOTIDE SEQUENCE [LARGE SCALE GENOMIC DNA]</scope>
</reference>
<reference key="7">
    <citation type="submission" date="2005-07" db="EMBL/GenBank/DDBJ databases">
        <authorList>
            <person name="Mural R.J."/>
            <person name="Istrail S."/>
            <person name="Sutton G.G."/>
            <person name="Florea L."/>
            <person name="Halpern A.L."/>
            <person name="Mobarry C.M."/>
            <person name="Lippert R."/>
            <person name="Walenz B."/>
            <person name="Shatkay H."/>
            <person name="Dew I."/>
            <person name="Miller J.R."/>
            <person name="Flanigan M.J."/>
            <person name="Edwards N.J."/>
            <person name="Bolanos R."/>
            <person name="Fasulo D."/>
            <person name="Halldorsson B.V."/>
            <person name="Hannenhalli S."/>
            <person name="Turner R."/>
            <person name="Yooseph S."/>
            <person name="Lu F."/>
            <person name="Nusskern D.R."/>
            <person name="Shue B.C."/>
            <person name="Zheng X.H."/>
            <person name="Zhong F."/>
            <person name="Delcher A.L."/>
            <person name="Huson D.H."/>
            <person name="Kravitz S.A."/>
            <person name="Mouchard L."/>
            <person name="Reinert K."/>
            <person name="Remington K.A."/>
            <person name="Clark A.G."/>
            <person name="Waterman M.S."/>
            <person name="Eichler E.E."/>
            <person name="Adams M.D."/>
            <person name="Hunkapiller M.W."/>
            <person name="Myers E.W."/>
            <person name="Venter J.C."/>
        </authorList>
    </citation>
    <scope>NUCLEOTIDE SEQUENCE [LARGE SCALE GENOMIC DNA]</scope>
</reference>
<reference key="8">
    <citation type="journal article" date="2004" name="Genome Res.">
        <title>The status, quality, and expansion of the NIH full-length cDNA project: the Mammalian Gene Collection (MGC).</title>
        <authorList>
            <consortium name="The MGC Project Team"/>
        </authorList>
    </citation>
    <scope>NUCLEOTIDE SEQUENCE [LARGE SCALE MRNA] (ISOFORM 2)</scope>
    <source>
        <tissue>Cervix</tissue>
    </source>
</reference>
<reference key="9">
    <citation type="submission" date="1998-06" db="EMBL/GenBank/DDBJ databases">
        <authorList>
            <person name="Yu W."/>
            <person name="Gibbs R.A."/>
        </authorList>
    </citation>
    <scope>NUCLEOTIDE SEQUENCE [LARGE SCALE MRNA] OF 1-498 (ISOFORM 2)</scope>
    <source>
        <tissue>Brain</tissue>
    </source>
</reference>
<reference key="10">
    <citation type="journal article" date="1993" name="Biochim. Biophys. Acta">
        <title>Exon skipping in the expression of the gene immediately upstream of N-ras (unr/NRU).</title>
        <authorList>
            <person name="Boussadia O."/>
            <person name="Jacquemin-Sablon H."/>
            <person name="Dautry F."/>
        </authorList>
    </citation>
    <scope>NUCLEOTIDE SEQUENCE [MRNA] OF 67-166</scope>
    <scope>ALTERNATIVE SPLICING</scope>
</reference>
<reference key="11">
    <citation type="journal article" date="1999" name="Genes Dev.">
        <title>unr, a cellular cytoplasmic RNA-binding protein with five cold-shock domains, is required for internal initiation of translation of human rhinovirus RNA.</title>
        <authorList>
            <person name="Hunt S.L."/>
            <person name="Hsuan J.J."/>
            <person name="Totty N."/>
            <person name="Jackson R.J."/>
        </authorList>
    </citation>
    <scope>FUNCTION (MICROBIAL INFECTION)</scope>
    <scope>INTERACTION WITH STRAP</scope>
</reference>
<reference key="12">
    <citation type="journal article" date="2000" name="Cell">
        <title>A mechanism for translationally coupled mRNA turnover: interaction between the poly(A) tail and a c-fos RNA coding determinant via a protein complex.</title>
        <authorList>
            <person name="Grosset C."/>
            <person name="Chen C.-Y.A."/>
            <person name="Xu N."/>
            <person name="Sonenberg N."/>
            <person name="Jacquemin-Sablon H."/>
            <person name="Shyu A.-B."/>
        </authorList>
    </citation>
    <scope>FUNCTION IN TRANSLATIONALLY COUPLED MRNA TURNOVER</scope>
    <scope>IDENTIFICATION IN A COMPLEX WITH HNRPD; SYNCRIP; PABPC1 AND PAIP1</scope>
</reference>
<reference key="13">
    <citation type="journal article" date="2004" name="Genes Dev.">
        <title>UNR, a new partner of poly(A)-binding protein, plays a key role in translationally coupled mRNA turnover mediated by the c-fos major coding-region determinant.</title>
        <authorList>
            <person name="Chang T.-C."/>
            <person name="Yamashita A."/>
            <person name="Chen C.-Y.A."/>
            <person name="Yamashita Y."/>
            <person name="Zhu W."/>
            <person name="Durdan S."/>
            <person name="Kahvejian A."/>
            <person name="Sonenberg N."/>
            <person name="Shyu A.-B."/>
        </authorList>
    </citation>
    <scope>FUNCTION</scope>
    <scope>INTERACTION WITH PABPC1</scope>
</reference>
<reference key="14">
    <citation type="journal article" date="2005" name="Nucleic Acids Res.">
        <title>The autoregulatory translational control element of poly(A)-binding protein mRNA forms a heteromeric ribonucleoprotein complex.</title>
        <authorList>
            <person name="Patel G.P."/>
            <person name="Ma S."/>
            <person name="Bag J."/>
        </authorList>
    </citation>
    <scope>IDENTIFICATION IN A MRNP COMPLEX WITH IGF2BP1 AND PABPC1</scope>
</reference>
<reference key="15">
    <citation type="journal article" date="2006" name="Cell">
        <title>Global, in vivo, and site-specific phosphorylation dynamics in signaling networks.</title>
        <authorList>
            <person name="Olsen J.V."/>
            <person name="Blagoev B."/>
            <person name="Gnad F."/>
            <person name="Macek B."/>
            <person name="Kumar C."/>
            <person name="Mortensen P."/>
            <person name="Mann M."/>
        </authorList>
    </citation>
    <scope>IDENTIFICATION BY MASS SPECTROMETRY [LARGE SCALE ANALYSIS]</scope>
    <source>
        <tissue>Cervix carcinoma</tissue>
    </source>
</reference>
<reference key="16">
    <citation type="journal article" date="2008" name="Proc. Natl. Acad. Sci. U.S.A.">
        <title>A quantitative atlas of mitotic phosphorylation.</title>
        <authorList>
            <person name="Dephoure N."/>
            <person name="Zhou C."/>
            <person name="Villen J."/>
            <person name="Beausoleil S.A."/>
            <person name="Bakalarski C.E."/>
            <person name="Elledge S.J."/>
            <person name="Gygi S.P."/>
        </authorList>
    </citation>
    <scope>PHOSPHORYLATION [LARGE SCALE ANALYSIS] AT SER-123</scope>
    <scope>IDENTIFICATION BY MASS SPECTROMETRY [LARGE SCALE ANALYSIS]</scope>
    <source>
        <tissue>Cervix carcinoma</tissue>
    </source>
</reference>
<reference key="17">
    <citation type="journal article" date="2009" name="Anal. Chem.">
        <title>Lys-N and trypsin cover complementary parts of the phosphoproteome in a refined SCX-based approach.</title>
        <authorList>
            <person name="Gauci S."/>
            <person name="Helbig A.O."/>
            <person name="Slijper M."/>
            <person name="Krijgsveld J."/>
            <person name="Heck A.J."/>
            <person name="Mohammed S."/>
        </authorList>
    </citation>
    <scope>IDENTIFICATION BY MASS SPECTROMETRY [LARGE SCALE ANALYSIS]</scope>
</reference>
<reference key="18">
    <citation type="journal article" date="2009" name="Science">
        <title>Lysine acetylation targets protein complexes and co-regulates major cellular functions.</title>
        <authorList>
            <person name="Choudhary C."/>
            <person name="Kumar C."/>
            <person name="Gnad F."/>
            <person name="Nielsen M.L."/>
            <person name="Rehman M."/>
            <person name="Walther T.C."/>
            <person name="Olsen J.V."/>
            <person name="Mann M."/>
        </authorList>
    </citation>
    <scope>ACETYLATION [LARGE SCALE ANALYSIS] AT LYS-81</scope>
    <scope>IDENTIFICATION BY MASS SPECTROMETRY [LARGE SCALE ANALYSIS]</scope>
</reference>
<reference key="19">
    <citation type="journal article" date="2010" name="Sci. Signal.">
        <title>Quantitative phosphoproteomics reveals widespread full phosphorylation site occupancy during mitosis.</title>
        <authorList>
            <person name="Olsen J.V."/>
            <person name="Vermeulen M."/>
            <person name="Santamaria A."/>
            <person name="Kumar C."/>
            <person name="Miller M.L."/>
            <person name="Jensen L.J."/>
            <person name="Gnad F."/>
            <person name="Cox J."/>
            <person name="Jensen T.S."/>
            <person name="Nigg E.A."/>
            <person name="Brunak S."/>
            <person name="Mann M."/>
        </authorList>
    </citation>
    <scope>PHOSPHORYLATION [LARGE SCALE ANALYSIS] AT SER-514</scope>
    <scope>IDENTIFICATION BY MASS SPECTROMETRY [LARGE SCALE ANALYSIS]</scope>
    <source>
        <tissue>Cervix carcinoma</tissue>
    </source>
</reference>
<reference key="20">
    <citation type="journal article" date="2011" name="BMC Syst. Biol.">
        <title>Initial characterization of the human central proteome.</title>
        <authorList>
            <person name="Burkard T.R."/>
            <person name="Planyavsky M."/>
            <person name="Kaupe I."/>
            <person name="Breitwieser F.P."/>
            <person name="Buerckstuemmer T."/>
            <person name="Bennett K.L."/>
            <person name="Superti-Furga G."/>
            <person name="Colinge J."/>
        </authorList>
    </citation>
    <scope>IDENTIFICATION BY MASS SPECTROMETRY [LARGE SCALE ANALYSIS]</scope>
</reference>
<reference key="21">
    <citation type="journal article" date="2011" name="Sci. Signal.">
        <title>System-wide temporal characterization of the proteome and phosphoproteome of human embryonic stem cell differentiation.</title>
        <authorList>
            <person name="Rigbolt K.T."/>
            <person name="Prokhorova T.A."/>
            <person name="Akimov V."/>
            <person name="Henningsen J."/>
            <person name="Johansen P.T."/>
            <person name="Kratchmarova I."/>
            <person name="Kassem M."/>
            <person name="Mann M."/>
            <person name="Olsen J.V."/>
            <person name="Blagoev B."/>
        </authorList>
    </citation>
    <scope>PHOSPHORYLATION [LARGE SCALE ANALYSIS] AT SER-514</scope>
    <scope>IDENTIFICATION BY MASS SPECTROMETRY [LARGE SCALE ANALYSIS]</scope>
</reference>
<reference key="22">
    <citation type="journal article" date="2012" name="Proc. Natl. Acad. Sci. U.S.A.">
        <title>N-terminal acetylome analyses and functional insights of the N-terminal acetyltransferase NatB.</title>
        <authorList>
            <person name="Van Damme P."/>
            <person name="Lasa M."/>
            <person name="Polevoda B."/>
            <person name="Gazquez C."/>
            <person name="Elosegui-Artola A."/>
            <person name="Kim D.S."/>
            <person name="De Juan-Pardo E."/>
            <person name="Demeyer K."/>
            <person name="Hole K."/>
            <person name="Larrea E."/>
            <person name="Timmerman E."/>
            <person name="Prieto J."/>
            <person name="Arnesen T."/>
            <person name="Sherman F."/>
            <person name="Gevaert K."/>
            <person name="Aldabe R."/>
        </authorList>
    </citation>
    <scope>IDENTIFICATION BY MASS SPECTROMETRY [LARGE SCALE ANALYSIS]</scope>
</reference>
<reference key="23">
    <citation type="journal article" date="2013" name="J. Proteome Res.">
        <title>Toward a comprehensive characterization of a human cancer cell phosphoproteome.</title>
        <authorList>
            <person name="Zhou H."/>
            <person name="Di Palma S."/>
            <person name="Preisinger C."/>
            <person name="Peng M."/>
            <person name="Polat A.N."/>
            <person name="Heck A.J."/>
            <person name="Mohammed S."/>
        </authorList>
    </citation>
    <scope>PHOSPHORYLATION [LARGE SCALE ANALYSIS] AT SER-123; SER-276; SER-584 AND THR-761</scope>
    <scope>IDENTIFICATION BY MASS SPECTROMETRY [LARGE SCALE ANALYSIS]</scope>
    <source>
        <tissue>Cervix carcinoma</tissue>
        <tissue>Erythroleukemia</tissue>
    </source>
</reference>
<reference key="24">
    <citation type="journal article" date="2014" name="Nat. Struct. Mol. Biol.">
        <title>Uncovering global SUMOylation signaling networks in a site-specific manner.</title>
        <authorList>
            <person name="Hendriks I.A."/>
            <person name="D'Souza R.C."/>
            <person name="Yang B."/>
            <person name="Verlaan-de Vries M."/>
            <person name="Mann M."/>
            <person name="Vertegaal A.C."/>
        </authorList>
    </citation>
    <scope>SUMOYLATION [LARGE SCALE ANALYSIS] AT LYS-91</scope>
    <scope>IDENTIFICATION BY MASS SPECTROMETRY [LARGE SCALE ANALYSIS]</scope>
</reference>
<reference key="25">
    <citation type="journal article" date="2016" name="Nucleic Acids Res.">
        <title>The DDX6-4E-T interaction mediates translational repression and P-body assembly.</title>
        <authorList>
            <person name="Kamenska A."/>
            <person name="Simpson C."/>
            <person name="Vindry C."/>
            <person name="Broomhead H."/>
            <person name="Benard M."/>
            <person name="Ernoult-Lange M."/>
            <person name="Lee B.P."/>
            <person name="Harries L.W."/>
            <person name="Weil D."/>
            <person name="Standart N."/>
        </authorList>
    </citation>
    <scope>INTERACTION WITH EIF4ENIF1</scope>
</reference>
<reference key="26">
    <citation type="journal article" date="2017" name="Nat. Struct. Mol. Biol.">
        <title>Site-specific mapping of the human SUMO proteome reveals co-modification with phosphorylation.</title>
        <authorList>
            <person name="Hendriks I.A."/>
            <person name="Lyon D."/>
            <person name="Young C."/>
            <person name="Jensen L.J."/>
            <person name="Vertegaal A.C."/>
            <person name="Nielsen M.L."/>
        </authorList>
    </citation>
    <scope>SUMOYLATION [LARGE SCALE ANALYSIS] AT LYS-91</scope>
    <scope>IDENTIFICATION BY MASS SPECTROMETRY [LARGE SCALE ANALYSIS]</scope>
</reference>
<reference key="27">
    <citation type="journal article" date="2018" name="Mol. Cell">
        <title>High-Density Proximity Mapping Reveals the Subcellular Organization of mRNA-Associated Granules and Bodies.</title>
        <authorList>
            <person name="Youn J.Y."/>
            <person name="Dunham W.H."/>
            <person name="Hong S.J."/>
            <person name="Knight J.D.R."/>
            <person name="Bashkurov M."/>
            <person name="Chen G.I."/>
            <person name="Bagci H."/>
            <person name="Rathod B."/>
            <person name="MacLeod G."/>
            <person name="Eng S.W.M."/>
            <person name="Angers S."/>
            <person name="Morris Q."/>
            <person name="Fabian M."/>
            <person name="Cote J.F."/>
            <person name="Gingras A.C."/>
        </authorList>
    </citation>
    <scope>FUNCTION</scope>
    <scope>SUBCELLULAR LOCATION</scope>
</reference>
<reference key="28">
    <citation type="journal article" date="2020" name="Genes Dev.">
        <title>4E-T-bound mRNAs are stored in a silenced and deadenylated form.</title>
        <authorList>
            <person name="Raesch F."/>
            <person name="Weber R."/>
            <person name="Izaurralde E."/>
            <person name="Igreja C."/>
        </authorList>
    </citation>
    <scope>SUBCELLULAR LOCATION</scope>
    <scope>INTERACTION WITH EIF4ENIF1</scope>
</reference>
<reference key="29">
    <citation type="journal article" date="2023" name="Life. Sci Alliance">
        <title>N-terminal proteoforms may engage in different protein complexes.</title>
        <authorList>
            <person name="Bogaert A."/>
            <person name="Fijalkowska D."/>
            <person name="Staes A."/>
            <person name="Van de Steene T."/>
            <person name="Vuylsteke M."/>
            <person name="Stadler C."/>
            <person name="Eyckerman S."/>
            <person name="Spirohn K."/>
            <person name="Hao T."/>
            <person name="Calderwood M.A."/>
            <person name="Gevaert K."/>
        </authorList>
    </citation>
    <scope>IDENTIFICATION BY MASS SPECTROMETRY (ISOFORM 5)</scope>
    <scope>ACETYLATION AT MET-1 (ISOFORM 5)</scope>
</reference>
<reference key="30">
    <citation type="journal article" date="2010" name="J. Struct. Funct. Genomics">
        <title>The NMR solution structures of the five constituent cold-shock domains (CSD) of the human UNR (upstream of N-ras) protein.</title>
        <authorList>
            <person name="Goroncy A.K."/>
            <person name="Koshiba S."/>
            <person name="Tochio N."/>
            <person name="Tomizawa T."/>
            <person name="Inoue M."/>
            <person name="Watanabe S."/>
            <person name="Harada T."/>
            <person name="Tanaka A."/>
            <person name="Ohara O."/>
            <person name="Kigawa T."/>
            <person name="Yokoyama S."/>
        </authorList>
    </citation>
    <scope>STRUCTURE BY NMR OF 15-90; 175-259; 348-424; 508-582 AND 673-738</scope>
</reference>